<protein>
    <recommendedName>
        <fullName>ATP-binding cassette sub-family D member 3</fullName>
        <ecNumber evidence="18 25">3.1.2.-</ecNumber>
        <ecNumber evidence="9 18 25">7.6.2.-</ecNumber>
    </recommendedName>
    <alternativeName>
        <fullName evidence="20">70 kDa peroxisomal membrane protein</fullName>
        <shortName>PMP70</shortName>
    </alternativeName>
</protein>
<name>ABCD3_HUMAN</name>
<dbReference type="EC" id="3.1.2.-" evidence="18 25"/>
<dbReference type="EC" id="7.6.2.-" evidence="9 18 25"/>
<dbReference type="EMBL" id="M81182">
    <property type="protein sequence ID" value="AAA60128.1"/>
    <property type="molecule type" value="mRNA"/>
</dbReference>
<dbReference type="EMBL" id="X58528">
    <property type="protein sequence ID" value="CAA41416.1"/>
    <property type="molecule type" value="mRNA"/>
</dbReference>
<dbReference type="EMBL" id="X83467">
    <property type="protein sequence ID" value="CAA58470.1"/>
    <property type="molecule type" value="Genomic_DNA"/>
</dbReference>
<dbReference type="EMBL" id="X83468">
    <property type="protein sequence ID" value="CAA58470.1"/>
    <property type="status" value="JOINED"/>
    <property type="molecule type" value="Genomic_DNA"/>
</dbReference>
<dbReference type="EMBL" id="X83469">
    <property type="protein sequence ID" value="CAA58470.1"/>
    <property type="status" value="JOINED"/>
    <property type="molecule type" value="Genomic_DNA"/>
</dbReference>
<dbReference type="EMBL" id="X83470">
    <property type="protein sequence ID" value="CAA58470.1"/>
    <property type="status" value="JOINED"/>
    <property type="molecule type" value="Genomic_DNA"/>
</dbReference>
<dbReference type="EMBL" id="X83471">
    <property type="protein sequence ID" value="CAA58470.1"/>
    <property type="status" value="JOINED"/>
    <property type="molecule type" value="Genomic_DNA"/>
</dbReference>
<dbReference type="EMBL" id="X83472">
    <property type="protein sequence ID" value="CAA58470.1"/>
    <property type="status" value="JOINED"/>
    <property type="molecule type" value="Genomic_DNA"/>
</dbReference>
<dbReference type="EMBL" id="X83473">
    <property type="protein sequence ID" value="CAA58470.1"/>
    <property type="status" value="JOINED"/>
    <property type="molecule type" value="Genomic_DNA"/>
</dbReference>
<dbReference type="EMBL" id="X83474">
    <property type="protein sequence ID" value="CAA58470.1"/>
    <property type="status" value="JOINED"/>
    <property type="molecule type" value="Genomic_DNA"/>
</dbReference>
<dbReference type="EMBL" id="X83475">
    <property type="protein sequence ID" value="CAA58470.1"/>
    <property type="status" value="JOINED"/>
    <property type="molecule type" value="Genomic_DNA"/>
</dbReference>
<dbReference type="EMBL" id="X83476">
    <property type="protein sequence ID" value="CAA58470.1"/>
    <property type="status" value="JOINED"/>
    <property type="molecule type" value="Genomic_DNA"/>
</dbReference>
<dbReference type="EMBL" id="X83477">
    <property type="protein sequence ID" value="CAA58470.1"/>
    <property type="status" value="JOINED"/>
    <property type="molecule type" value="Genomic_DNA"/>
</dbReference>
<dbReference type="EMBL" id="X83478">
    <property type="protein sequence ID" value="CAA58470.1"/>
    <property type="status" value="JOINED"/>
    <property type="molecule type" value="Genomic_DNA"/>
</dbReference>
<dbReference type="EMBL" id="X83479">
    <property type="protein sequence ID" value="CAA58470.1"/>
    <property type="status" value="JOINED"/>
    <property type="molecule type" value="Genomic_DNA"/>
</dbReference>
<dbReference type="EMBL" id="X83480">
    <property type="protein sequence ID" value="CAA58470.1"/>
    <property type="status" value="JOINED"/>
    <property type="molecule type" value="Genomic_DNA"/>
</dbReference>
<dbReference type="EMBL" id="X83481">
    <property type="protein sequence ID" value="CAA58470.1"/>
    <property type="status" value="JOINED"/>
    <property type="molecule type" value="Genomic_DNA"/>
</dbReference>
<dbReference type="EMBL" id="X83482">
    <property type="protein sequence ID" value="CAA58470.1"/>
    <property type="status" value="JOINED"/>
    <property type="molecule type" value="Genomic_DNA"/>
</dbReference>
<dbReference type="EMBL" id="X83483">
    <property type="protein sequence ID" value="CAA58470.1"/>
    <property type="status" value="JOINED"/>
    <property type="molecule type" value="Genomic_DNA"/>
</dbReference>
<dbReference type="EMBL" id="X83484">
    <property type="protein sequence ID" value="CAA58470.1"/>
    <property type="status" value="JOINED"/>
    <property type="molecule type" value="Genomic_DNA"/>
</dbReference>
<dbReference type="EMBL" id="X83485">
    <property type="protein sequence ID" value="CAA58470.1"/>
    <property type="status" value="JOINED"/>
    <property type="molecule type" value="Genomic_DNA"/>
</dbReference>
<dbReference type="EMBL" id="X83486">
    <property type="protein sequence ID" value="CAA58470.1"/>
    <property type="status" value="JOINED"/>
    <property type="molecule type" value="Genomic_DNA"/>
</dbReference>
<dbReference type="EMBL" id="X83487">
    <property type="protein sequence ID" value="CAA58470.1"/>
    <property type="status" value="JOINED"/>
    <property type="molecule type" value="Genomic_DNA"/>
</dbReference>
<dbReference type="EMBL" id="X83488">
    <property type="protein sequence ID" value="CAA58470.1"/>
    <property type="status" value="JOINED"/>
    <property type="molecule type" value="Genomic_DNA"/>
</dbReference>
<dbReference type="EMBL" id="X83489">
    <property type="protein sequence ID" value="CAA58470.1"/>
    <property type="status" value="JOINED"/>
    <property type="molecule type" value="Genomic_DNA"/>
</dbReference>
<dbReference type="EMBL" id="BT006644">
    <property type="protein sequence ID" value="AAP35290.1"/>
    <property type="molecule type" value="mRNA"/>
</dbReference>
<dbReference type="EMBL" id="AC093117">
    <property type="status" value="NOT_ANNOTATED_CDS"/>
    <property type="molecule type" value="Genomic_DNA"/>
</dbReference>
<dbReference type="EMBL" id="AC118469">
    <property type="status" value="NOT_ANNOTATED_CDS"/>
    <property type="molecule type" value="Genomic_DNA"/>
</dbReference>
<dbReference type="EMBL" id="AL138758">
    <property type="status" value="NOT_ANNOTATED_CDS"/>
    <property type="molecule type" value="Genomic_DNA"/>
</dbReference>
<dbReference type="EMBL" id="CH471097">
    <property type="protein sequence ID" value="EAW73049.1"/>
    <property type="molecule type" value="Genomic_DNA"/>
</dbReference>
<dbReference type="EMBL" id="CH471097">
    <property type="protein sequence ID" value="EAW73050.1"/>
    <property type="molecule type" value="Genomic_DNA"/>
</dbReference>
<dbReference type="EMBL" id="CH471097">
    <property type="protein sequence ID" value="EAW73047.1"/>
    <property type="molecule type" value="Genomic_DNA"/>
</dbReference>
<dbReference type="EMBL" id="CH471097">
    <property type="protein sequence ID" value="EAW73048.1"/>
    <property type="molecule type" value="Genomic_DNA"/>
</dbReference>
<dbReference type="EMBL" id="BC009712">
    <property type="protein sequence ID" value="AAH09712.1"/>
    <property type="molecule type" value="mRNA"/>
</dbReference>
<dbReference type="EMBL" id="BC068509">
    <property type="protein sequence ID" value="AAH68509.1"/>
    <property type="molecule type" value="mRNA"/>
</dbReference>
<dbReference type="CCDS" id="CCDS44175.1">
    <molecule id="P28288-3"/>
</dbReference>
<dbReference type="CCDS" id="CCDS749.1">
    <molecule id="P28288-1"/>
</dbReference>
<dbReference type="PIR" id="S20313">
    <property type="entry name" value="S20313"/>
</dbReference>
<dbReference type="RefSeq" id="NP_001116146.1">
    <molecule id="P28288-3"/>
    <property type="nucleotide sequence ID" value="NM_001122674.2"/>
</dbReference>
<dbReference type="RefSeq" id="NP_002849.1">
    <molecule id="P28288-1"/>
    <property type="nucleotide sequence ID" value="NM_002858.4"/>
</dbReference>
<dbReference type="PDB" id="8Z0F">
    <property type="method" value="EM"/>
    <property type="resolution" value="3.27 A"/>
    <property type="chains" value="A/B=50-659"/>
</dbReference>
<dbReference type="PDB" id="8Z9X">
    <property type="method" value="EM"/>
    <property type="resolution" value="2.96 A"/>
    <property type="chains" value="A/B=50-659"/>
</dbReference>
<dbReference type="PDBsum" id="8Z0F"/>
<dbReference type="PDBsum" id="8Z9X"/>
<dbReference type="EMDB" id="EMD-39703"/>
<dbReference type="EMDB" id="EMD-39871"/>
<dbReference type="SMR" id="P28288"/>
<dbReference type="BioGRID" id="111783">
    <property type="interactions" value="280"/>
</dbReference>
<dbReference type="FunCoup" id="P28288">
    <property type="interactions" value="2439"/>
</dbReference>
<dbReference type="IntAct" id="P28288">
    <property type="interactions" value="122"/>
</dbReference>
<dbReference type="MINT" id="P28288"/>
<dbReference type="STRING" id="9606.ENSP00000359233"/>
<dbReference type="TCDB" id="3.A.1.203.1">
    <property type="family name" value="the atp-binding cassette (abc) superfamily"/>
</dbReference>
<dbReference type="GlyCosmos" id="P28288">
    <property type="glycosylation" value="3 sites, No reported glycans"/>
</dbReference>
<dbReference type="GlyGen" id="P28288">
    <property type="glycosylation" value="4 sites, 1 O-linked glycan (1 site)"/>
</dbReference>
<dbReference type="iPTMnet" id="P28288"/>
<dbReference type="MetOSite" id="P28288"/>
<dbReference type="PhosphoSitePlus" id="P28288"/>
<dbReference type="SwissPalm" id="P28288"/>
<dbReference type="BioMuta" id="ABCD3"/>
<dbReference type="DMDM" id="130358"/>
<dbReference type="CPTAC" id="CPTAC-157"/>
<dbReference type="jPOST" id="P28288"/>
<dbReference type="MassIVE" id="P28288"/>
<dbReference type="PaxDb" id="9606-ENSP00000359233"/>
<dbReference type="PeptideAtlas" id="P28288"/>
<dbReference type="ProteomicsDB" id="54454">
    <molecule id="P28288-1"/>
</dbReference>
<dbReference type="ProteomicsDB" id="54455">
    <molecule id="P28288-2"/>
</dbReference>
<dbReference type="ProteomicsDB" id="54456">
    <molecule id="P28288-3"/>
</dbReference>
<dbReference type="Pumba" id="P28288"/>
<dbReference type="Antibodypedia" id="33667">
    <property type="antibodies" value="220 antibodies from 35 providers"/>
</dbReference>
<dbReference type="DNASU" id="5825"/>
<dbReference type="Ensembl" id="ENST00000315713.5">
    <molecule id="P28288-3"/>
    <property type="protein sequence ID" value="ENSP00000326880.5"/>
    <property type="gene ID" value="ENSG00000117528.14"/>
</dbReference>
<dbReference type="Ensembl" id="ENST00000370214.9">
    <molecule id="P28288-1"/>
    <property type="protein sequence ID" value="ENSP00000359233.4"/>
    <property type="gene ID" value="ENSG00000117528.14"/>
</dbReference>
<dbReference type="GeneID" id="5825"/>
<dbReference type="KEGG" id="hsa:5825"/>
<dbReference type="MANE-Select" id="ENST00000370214.9">
    <property type="protein sequence ID" value="ENSP00000359233.4"/>
    <property type="RefSeq nucleotide sequence ID" value="NM_002858.4"/>
    <property type="RefSeq protein sequence ID" value="NP_002849.1"/>
</dbReference>
<dbReference type="UCSC" id="uc001dqm.5">
    <molecule id="P28288-1"/>
    <property type="organism name" value="human"/>
</dbReference>
<dbReference type="AGR" id="HGNC:67"/>
<dbReference type="CTD" id="5825"/>
<dbReference type="DisGeNET" id="5825"/>
<dbReference type="GeneCards" id="ABCD3"/>
<dbReference type="HGNC" id="HGNC:67">
    <property type="gene designation" value="ABCD3"/>
</dbReference>
<dbReference type="HPA" id="ENSG00000117528">
    <property type="expression patterns" value="Tissue enhanced (liver)"/>
</dbReference>
<dbReference type="MalaCards" id="ABCD3"/>
<dbReference type="MIM" id="170995">
    <property type="type" value="gene"/>
</dbReference>
<dbReference type="MIM" id="616278">
    <property type="type" value="phenotype"/>
</dbReference>
<dbReference type="neXtProt" id="NX_P28288"/>
<dbReference type="OpenTargets" id="ENSG00000117528"/>
<dbReference type="PharmGKB" id="PA24402"/>
<dbReference type="VEuPathDB" id="HostDB:ENSG00000117528"/>
<dbReference type="eggNOG" id="KOG0060">
    <property type="taxonomic scope" value="Eukaryota"/>
</dbReference>
<dbReference type="GeneTree" id="ENSGT00950000182955"/>
<dbReference type="HOGENOM" id="CLU_007587_5_1_1"/>
<dbReference type="InParanoid" id="P28288"/>
<dbReference type="OMA" id="IHDMYLD"/>
<dbReference type="OrthoDB" id="422637at2759"/>
<dbReference type="PAN-GO" id="P28288">
    <property type="GO annotations" value="8 GO annotations based on evolutionary models"/>
</dbReference>
<dbReference type="PhylomeDB" id="P28288"/>
<dbReference type="TreeFam" id="TF105205"/>
<dbReference type="BRENDA" id="7.6.2.4">
    <property type="organism ID" value="2681"/>
</dbReference>
<dbReference type="PathwayCommons" id="P28288"/>
<dbReference type="Reactome" id="R-HSA-1369062">
    <property type="pathway name" value="ABC transporters in lipid homeostasis"/>
</dbReference>
<dbReference type="Reactome" id="R-HSA-8980692">
    <property type="pathway name" value="RHOA GTPase cycle"/>
</dbReference>
<dbReference type="Reactome" id="R-HSA-9013106">
    <property type="pathway name" value="RHOC GTPase cycle"/>
</dbReference>
<dbReference type="Reactome" id="R-HSA-9603798">
    <property type="pathway name" value="Class I peroxisomal membrane protein import"/>
</dbReference>
<dbReference type="SignaLink" id="P28288"/>
<dbReference type="BioGRID-ORCS" id="5825">
    <property type="hits" value="24 hits in 1166 CRISPR screens"/>
</dbReference>
<dbReference type="CD-CODE" id="FB4E32DD">
    <property type="entry name" value="Presynaptic clusters and postsynaptic densities"/>
</dbReference>
<dbReference type="ChiTaRS" id="ABCD3">
    <property type="organism name" value="human"/>
</dbReference>
<dbReference type="GeneWiki" id="ABCD3"/>
<dbReference type="GenomeRNAi" id="5825"/>
<dbReference type="Pharos" id="P28288">
    <property type="development level" value="Tbio"/>
</dbReference>
<dbReference type="PRO" id="PR:P28288"/>
<dbReference type="Proteomes" id="UP000005640">
    <property type="component" value="Chromosome 1"/>
</dbReference>
<dbReference type="RNAct" id="P28288">
    <property type="molecule type" value="protein"/>
</dbReference>
<dbReference type="Bgee" id="ENSG00000117528">
    <property type="expression patterns" value="Expressed in secondary oocyte and 214 other cell types or tissues"/>
</dbReference>
<dbReference type="ExpressionAtlas" id="P28288">
    <property type="expression patterns" value="baseline and differential"/>
</dbReference>
<dbReference type="GO" id="GO:0005829">
    <property type="term" value="C:cytosol"/>
    <property type="evidence" value="ECO:0000304"/>
    <property type="project" value="Reactome"/>
</dbReference>
<dbReference type="GO" id="GO:0043231">
    <property type="term" value="C:intracellular membrane-bounded organelle"/>
    <property type="evidence" value="ECO:0000314"/>
    <property type="project" value="HPA"/>
</dbReference>
<dbReference type="GO" id="GO:0016020">
    <property type="term" value="C:membrane"/>
    <property type="evidence" value="ECO:0007005"/>
    <property type="project" value="UniProtKB"/>
</dbReference>
<dbReference type="GO" id="GO:0005739">
    <property type="term" value="C:mitochondrion"/>
    <property type="evidence" value="ECO:0007669"/>
    <property type="project" value="Ensembl"/>
</dbReference>
<dbReference type="GO" id="GO:0005782">
    <property type="term" value="C:peroxisomal matrix"/>
    <property type="evidence" value="ECO:0000314"/>
    <property type="project" value="UniProtKB"/>
</dbReference>
<dbReference type="GO" id="GO:0005778">
    <property type="term" value="C:peroxisomal membrane"/>
    <property type="evidence" value="ECO:0007005"/>
    <property type="project" value="UniProtKB"/>
</dbReference>
<dbReference type="GO" id="GO:0005777">
    <property type="term" value="C:peroxisome"/>
    <property type="evidence" value="ECO:0000314"/>
    <property type="project" value="HPA"/>
</dbReference>
<dbReference type="GO" id="GO:0140359">
    <property type="term" value="F:ABC-type transporter activity"/>
    <property type="evidence" value="ECO:0007669"/>
    <property type="project" value="InterPro"/>
</dbReference>
<dbReference type="GO" id="GO:0005524">
    <property type="term" value="F:ATP binding"/>
    <property type="evidence" value="ECO:0000314"/>
    <property type="project" value="UniProtKB"/>
</dbReference>
<dbReference type="GO" id="GO:0016887">
    <property type="term" value="F:ATP hydrolysis activity"/>
    <property type="evidence" value="ECO:0000314"/>
    <property type="project" value="UniProtKB"/>
</dbReference>
<dbReference type="GO" id="GO:0042626">
    <property type="term" value="F:ATPase-coupled transmembrane transporter activity"/>
    <property type="evidence" value="ECO:0000314"/>
    <property type="project" value="UniProtKB"/>
</dbReference>
<dbReference type="GO" id="GO:0047617">
    <property type="term" value="F:fatty acyl-CoA hydrolase activity"/>
    <property type="evidence" value="ECO:0000314"/>
    <property type="project" value="UniProtKB"/>
</dbReference>
<dbReference type="GO" id="GO:0005324">
    <property type="term" value="F:long-chain fatty acid transmembrane transporter activity"/>
    <property type="evidence" value="ECO:0000315"/>
    <property type="project" value="UniProtKB"/>
</dbReference>
<dbReference type="GO" id="GO:0042803">
    <property type="term" value="F:protein homodimerization activity"/>
    <property type="evidence" value="ECO:0000314"/>
    <property type="project" value="UniProtKB"/>
</dbReference>
<dbReference type="GO" id="GO:0015721">
    <property type="term" value="P:bile acid and bile salt transport"/>
    <property type="evidence" value="ECO:0000250"/>
    <property type="project" value="UniProtKB"/>
</dbReference>
<dbReference type="GO" id="GO:0006699">
    <property type="term" value="P:bile acid biosynthetic process"/>
    <property type="evidence" value="ECO:0000250"/>
    <property type="project" value="UniProtKB"/>
</dbReference>
<dbReference type="GO" id="GO:0006635">
    <property type="term" value="P:fatty acid beta-oxidation"/>
    <property type="evidence" value="ECO:0000314"/>
    <property type="project" value="UniProtKB"/>
</dbReference>
<dbReference type="GO" id="GO:0006633">
    <property type="term" value="P:fatty acid biosynthetic process"/>
    <property type="evidence" value="ECO:0000315"/>
    <property type="project" value="UniProtKB"/>
</dbReference>
<dbReference type="GO" id="GO:0015910">
    <property type="term" value="P:long-chain fatty acid import into peroxisome"/>
    <property type="evidence" value="ECO:0000315"/>
    <property type="project" value="UniProtKB"/>
</dbReference>
<dbReference type="GO" id="GO:0007031">
    <property type="term" value="P:peroxisome organization"/>
    <property type="evidence" value="ECO:0000314"/>
    <property type="project" value="UniProtKB"/>
</dbReference>
<dbReference type="GO" id="GO:1903512">
    <property type="term" value="P:phytanic acid metabolic process"/>
    <property type="evidence" value="ECO:0000250"/>
    <property type="project" value="UniProtKB"/>
</dbReference>
<dbReference type="GO" id="GO:0009410">
    <property type="term" value="P:response to xenobiotic stimulus"/>
    <property type="evidence" value="ECO:0007669"/>
    <property type="project" value="Ensembl"/>
</dbReference>
<dbReference type="GO" id="GO:0042760">
    <property type="term" value="P:very long-chain fatty acid catabolic process"/>
    <property type="evidence" value="ECO:0000316"/>
    <property type="project" value="UniProtKB"/>
</dbReference>
<dbReference type="GO" id="GO:0000038">
    <property type="term" value="P:very long-chain fatty acid metabolic process"/>
    <property type="evidence" value="ECO:0000314"/>
    <property type="project" value="UniProtKB"/>
</dbReference>
<dbReference type="CDD" id="cd03223">
    <property type="entry name" value="ABCD_peroxisomal_ALDP"/>
    <property type="match status" value="1"/>
</dbReference>
<dbReference type="FunFam" id="1.20.1560.10:FF:000036">
    <property type="entry name" value="ATP-binding cassette sub-family D member 3"/>
    <property type="match status" value="1"/>
</dbReference>
<dbReference type="FunFam" id="3.40.50.300:FF:000636">
    <property type="entry name" value="ATP-binding cassette sub-family D member 3"/>
    <property type="match status" value="1"/>
</dbReference>
<dbReference type="Gene3D" id="1.20.1560.10">
    <property type="entry name" value="ABC transporter type 1, transmembrane domain"/>
    <property type="match status" value="1"/>
</dbReference>
<dbReference type="Gene3D" id="3.40.50.300">
    <property type="entry name" value="P-loop containing nucleotide triphosphate hydrolases"/>
    <property type="match status" value="1"/>
</dbReference>
<dbReference type="InterPro" id="IPR003593">
    <property type="entry name" value="AAA+_ATPase"/>
</dbReference>
<dbReference type="InterPro" id="IPR011527">
    <property type="entry name" value="ABC1_TM_dom"/>
</dbReference>
<dbReference type="InterPro" id="IPR036640">
    <property type="entry name" value="ABC1_TM_sf"/>
</dbReference>
<dbReference type="InterPro" id="IPR003439">
    <property type="entry name" value="ABC_transporter-like_ATP-bd"/>
</dbReference>
<dbReference type="InterPro" id="IPR017871">
    <property type="entry name" value="ABC_transporter-like_CS"/>
</dbReference>
<dbReference type="InterPro" id="IPR050835">
    <property type="entry name" value="ABC_transporter_sub-D"/>
</dbReference>
<dbReference type="InterPro" id="IPR005283">
    <property type="entry name" value="FA_transporter"/>
</dbReference>
<dbReference type="InterPro" id="IPR027417">
    <property type="entry name" value="P-loop_NTPase"/>
</dbReference>
<dbReference type="NCBIfam" id="TIGR00954">
    <property type="entry name" value="3a01203"/>
    <property type="match status" value="1"/>
</dbReference>
<dbReference type="PANTHER" id="PTHR11384:SF62">
    <property type="entry name" value="ATP-BINDING CASSETTE SUB-FAMILY D MEMBER 3"/>
    <property type="match status" value="1"/>
</dbReference>
<dbReference type="PANTHER" id="PTHR11384">
    <property type="entry name" value="ATP-BINDING CASSETTE, SUB-FAMILY D MEMBER"/>
    <property type="match status" value="1"/>
</dbReference>
<dbReference type="Pfam" id="PF06472">
    <property type="entry name" value="ABC_membrane_2"/>
    <property type="match status" value="1"/>
</dbReference>
<dbReference type="Pfam" id="PF00005">
    <property type="entry name" value="ABC_tran"/>
    <property type="match status" value="1"/>
</dbReference>
<dbReference type="SMART" id="SM00382">
    <property type="entry name" value="AAA"/>
    <property type="match status" value="1"/>
</dbReference>
<dbReference type="SUPFAM" id="SSF90123">
    <property type="entry name" value="ABC transporter transmembrane region"/>
    <property type="match status" value="1"/>
</dbReference>
<dbReference type="SUPFAM" id="SSF52540">
    <property type="entry name" value="P-loop containing nucleoside triphosphate hydrolases"/>
    <property type="match status" value="1"/>
</dbReference>
<dbReference type="PROSITE" id="PS50929">
    <property type="entry name" value="ABC_TM1F"/>
    <property type="match status" value="1"/>
</dbReference>
<dbReference type="PROSITE" id="PS00211">
    <property type="entry name" value="ABC_TRANSPORTER_1"/>
    <property type="match status" value="1"/>
</dbReference>
<dbReference type="PROSITE" id="PS50893">
    <property type="entry name" value="ABC_TRANSPORTER_2"/>
    <property type="match status" value="1"/>
</dbReference>
<organism>
    <name type="scientific">Homo sapiens</name>
    <name type="common">Human</name>
    <dbReference type="NCBI Taxonomy" id="9606"/>
    <lineage>
        <taxon>Eukaryota</taxon>
        <taxon>Metazoa</taxon>
        <taxon>Chordata</taxon>
        <taxon>Craniata</taxon>
        <taxon>Vertebrata</taxon>
        <taxon>Euteleostomi</taxon>
        <taxon>Mammalia</taxon>
        <taxon>Eutheria</taxon>
        <taxon>Euarchontoglires</taxon>
        <taxon>Primates</taxon>
        <taxon>Haplorrhini</taxon>
        <taxon>Catarrhini</taxon>
        <taxon>Hominidae</taxon>
        <taxon>Homo</taxon>
    </lineage>
</organism>
<feature type="chain" id="PRO_0000093309" description="ATP-binding cassette sub-family D member 3">
    <location>
        <begin position="1"/>
        <end position="659"/>
    </location>
</feature>
<feature type="transmembrane region" description="Helical" evidence="5">
    <location>
        <begin position="84"/>
        <end position="104"/>
    </location>
</feature>
<feature type="transmembrane region" description="Helical" evidence="5">
    <location>
        <begin position="126"/>
        <end position="146"/>
    </location>
</feature>
<feature type="transmembrane region" description="Helical" evidence="5">
    <location>
        <begin position="224"/>
        <end position="244"/>
    </location>
</feature>
<feature type="transmembrane region" description="Helical" evidence="5">
    <location>
        <begin position="313"/>
        <end position="333"/>
    </location>
</feature>
<feature type="domain" description="ABC transmembrane type-1" evidence="5">
    <location>
        <begin position="85"/>
        <end position="372"/>
    </location>
</feature>
<feature type="domain" description="ABC transporter" evidence="4">
    <location>
        <begin position="440"/>
        <end position="659"/>
    </location>
</feature>
<feature type="region of interest" description="Interaction with PEX19" evidence="11 13">
    <location>
        <begin position="1"/>
        <end position="61"/>
    </location>
</feature>
<feature type="binding site" evidence="4">
    <location>
        <begin position="473"/>
        <end position="480"/>
    </location>
    <ligand>
        <name>ATP</name>
        <dbReference type="ChEBI" id="CHEBI:30616"/>
    </ligand>
</feature>
<feature type="modified residue" description="N6-acetyllysine" evidence="2">
    <location>
        <position position="61"/>
    </location>
</feature>
<feature type="modified residue" description="N6-acetyllysine" evidence="28">
    <location>
        <position position="260"/>
    </location>
</feature>
<feature type="modified residue" description="N6-acetyllysine" evidence="28">
    <location>
        <position position="399"/>
    </location>
</feature>
<feature type="modified residue" description="N6-acetyllysine" evidence="2">
    <location>
        <position position="533"/>
    </location>
</feature>
<feature type="modified residue" description="Phosphoserine" evidence="2">
    <location>
        <position position="659"/>
    </location>
</feature>
<feature type="glycosylation site" description="N-linked (GlcNAc...) asparagine" evidence="3">
    <location>
        <position position="12"/>
    </location>
</feature>
<feature type="glycosylation site" description="N-linked (GlcNAc...) asparagine" evidence="3">
    <location>
        <position position="106"/>
    </location>
</feature>
<feature type="glycosylation site" description="N-linked (GlcNAc...) asparagine" evidence="3">
    <location>
        <position position="206"/>
    </location>
</feature>
<feature type="splice variant" id="VSP_031187" description="In isoform 3." evidence="21 23">
    <original>GPASMMAY</original>
    <variation>VLGKILWH</variation>
    <location>
        <begin position="229"/>
        <end position="236"/>
    </location>
</feature>
<feature type="splice variant" id="VSP_031188" description="In isoform 3." evidence="21 23">
    <location>
        <begin position="237"/>
        <end position="659"/>
    </location>
</feature>
<feature type="splice variant" id="VSP_031189" description="In isoform 2." evidence="21">
    <location>
        <begin position="277"/>
        <end position="386"/>
    </location>
</feature>
<feature type="sequence variant" id="VAR_000091" description="In dbSNP:rs121917999." evidence="10">
    <original>G</original>
    <variation>D</variation>
    <location>
        <position position="17"/>
    </location>
</feature>
<feature type="mutagenesis site" description="Abolishes localization to peroxisomes." evidence="13">
    <original>LLL</original>
    <variation>QQQ</variation>
    <location>
        <begin position="21"/>
        <end position="23"/>
    </location>
</feature>
<feature type="mutagenesis site" description="Abolishes localization to peroxisomes." evidence="13">
    <original>IL</original>
    <variation>NQ</variation>
    <location>
        <begin position="70"/>
        <end position="71"/>
    </location>
</feature>
<feature type="mutagenesis site" description="Abolishes localization to peroxisomes." evidence="13">
    <original>IL</original>
    <variation>AA</variation>
    <location>
        <begin position="307"/>
        <end position="308"/>
    </location>
</feature>
<feature type="mutagenesis site" description="Decreased ATP-binding affinity." evidence="9">
    <original>G</original>
    <variation>R</variation>
    <location>
        <position position="478"/>
    </location>
</feature>
<feature type="mutagenesis site" description="Decreased ATPase activity." evidence="9">
    <original>S</original>
    <variation>I</variation>
    <location>
        <position position="572"/>
    </location>
</feature>
<feature type="sequence conflict" description="In Ref. 2; CAA41416." evidence="24" ref="2">
    <original>M</original>
    <variation>K</variation>
    <location>
        <position position="175"/>
    </location>
</feature>
<feature type="sequence conflict" description="In Ref. 3; CAA58470." evidence="24" ref="3">
    <original>QD</original>
    <variation>LV</variation>
    <location>
        <begin position="191"/>
        <end position="192"/>
    </location>
</feature>
<feature type="sequence conflict" description="In Ref. 3; CAA58470." evidence="24" ref="3">
    <original>P</original>
    <variation>L</variation>
    <location>
        <position position="336"/>
    </location>
</feature>
<feature type="sequence conflict" description="In Ref. 2; CAA41416." evidence="24" ref="2">
    <original>G</original>
    <variation>R</variation>
    <location>
        <position position="503"/>
    </location>
</feature>
<feature type="sequence conflict" description="In Ref. 2; CAA41416." evidence="24" ref="2">
    <original>L</original>
    <variation>Q</variation>
    <location>
        <position position="542"/>
    </location>
</feature>
<feature type="sequence conflict" description="In Ref. 3; CAA58470." evidence="24" ref="3">
    <original>VGITLFTVSHRKSLWKHHE</original>
    <variation>GWHHSLHLCLIGNLFGNIMR</variation>
    <location>
        <begin position="616"/>
        <end position="634"/>
    </location>
</feature>
<keyword id="KW-0002">3D-structure</keyword>
<keyword id="KW-0007">Acetylation</keyword>
<keyword id="KW-0025">Alternative splicing</keyword>
<keyword id="KW-0067">ATP-binding</keyword>
<keyword id="KW-0325">Glycoprotein</keyword>
<keyword id="KW-0378">Hydrolase</keyword>
<keyword id="KW-0472">Membrane</keyword>
<keyword id="KW-0547">Nucleotide-binding</keyword>
<keyword id="KW-0576">Peroxisome</keyword>
<keyword id="KW-0597">Phosphoprotein</keyword>
<keyword id="KW-1267">Proteomics identification</keyword>
<keyword id="KW-1185">Reference proteome</keyword>
<keyword id="KW-1278">Translocase</keyword>
<keyword id="KW-0812">Transmembrane</keyword>
<keyword id="KW-1133">Transmembrane helix</keyword>
<keyword id="KW-0813">Transport</keyword>
<keyword id="KW-0832">Ubl conjugation</keyword>
<accession>P28288</accession>
<accession>D3DT46</accession>
<accession>Q15271</accession>
<accession>Q6NUN5</accession>
<accession>Q96DA3</accession>
<accession>Q9H529</accession>
<sequence length="659" mass="75476">MAAFSKYLTARNSSLAGAAFLLLCLLHKRRRALGLHGKKSGKPPLQNNEKEGKKERAVVDKVFFSRLIQILKIMVPRTFCKETGYLVLIAVMLVSRTYCDVWMIQNGTLIESGIIGRSRKDFKRYLLNFIAAMPLISLVNNFLKYGLNELKLCFRVRLTKYLYEEYLQAFTYYKMGNLDNRIANPDQLLTQDVEKFCNSVVDLYSNLSKPFLDIVLYIFKLTSAIGAQGPASMMAYLVVSGLFLTRLRRPIGKMTITEQKYEGEYRYVNSRLITNSEEIAFYNGNKREKQTVHSVFRKLVEHLHNFILFRFSMGFIDSIIAKYLATVVGYLVVSRPFLDLSHPRHLKSTHSELLEDYYQSGRMLLRMSQALGRIVLAGREMTRLAGFTARITELMQVLKDLNHGKYERTMVSQQEKGIEGVQVIPLIPGAGEIIIADNIIKFDHVPLATPNGDVLIRDLNFEVRSGANVLICGPNGCGKSSLFRVLGELWPLFGGRLTKPERGKLFYVPQRPYMTLGTLRDQVIYPDGREDQKRKGISDLVLKEYLDNVQLGHILEREGGWDSVQDWMDVLSGGEKQRMAMARLFYHKPQFAILDECTSAVSVDVEGYIYSHCRKVGITLFTVSHRKSLWKHHEYYLHMDGRGNYEFKQITEDTVEFGS</sequence>
<proteinExistence type="evidence at protein level"/>
<evidence type="ECO:0000250" key="1">
    <source>
        <dbReference type="UniProtKB" id="P33897"/>
    </source>
</evidence>
<evidence type="ECO:0000250" key="2">
    <source>
        <dbReference type="UniProtKB" id="P55096"/>
    </source>
</evidence>
<evidence type="ECO:0000255" key="3"/>
<evidence type="ECO:0000255" key="4">
    <source>
        <dbReference type="PROSITE-ProRule" id="PRU00434"/>
    </source>
</evidence>
<evidence type="ECO:0000255" key="5">
    <source>
        <dbReference type="PROSITE-ProRule" id="PRU00441"/>
    </source>
</evidence>
<evidence type="ECO:0000269" key="6">
    <source>
    </source>
</evidence>
<evidence type="ECO:0000269" key="7">
    <source>
    </source>
</evidence>
<evidence type="ECO:0000269" key="8">
    <source>
    </source>
</evidence>
<evidence type="ECO:0000269" key="9">
    <source>
    </source>
</evidence>
<evidence type="ECO:0000269" key="10">
    <source>
    </source>
</evidence>
<evidence type="ECO:0000269" key="11">
    <source>
    </source>
</evidence>
<evidence type="ECO:0000269" key="12">
    <source>
    </source>
</evidence>
<evidence type="ECO:0000269" key="13">
    <source>
    </source>
</evidence>
<evidence type="ECO:0000269" key="14">
    <source>
    </source>
</evidence>
<evidence type="ECO:0000269" key="15">
    <source>
    </source>
</evidence>
<evidence type="ECO:0000269" key="16">
    <source>
    </source>
</evidence>
<evidence type="ECO:0000269" key="17">
    <source>
    </source>
</evidence>
<evidence type="ECO:0000269" key="18">
    <source>
    </source>
</evidence>
<evidence type="ECO:0000269" key="19">
    <source>
    </source>
</evidence>
<evidence type="ECO:0000303" key="20">
    <source>
    </source>
</evidence>
<evidence type="ECO:0000303" key="21">
    <source>
    </source>
</evidence>
<evidence type="ECO:0000303" key="22">
    <source>
    </source>
</evidence>
<evidence type="ECO:0000303" key="23">
    <source ref="4"/>
</evidence>
<evidence type="ECO:0000305" key="24"/>
<evidence type="ECO:0000305" key="25">
    <source>
    </source>
</evidence>
<evidence type="ECO:0000305" key="26">
    <source>
    </source>
</evidence>
<evidence type="ECO:0000312" key="27">
    <source>
        <dbReference type="HGNC" id="HGNC:67"/>
    </source>
</evidence>
<evidence type="ECO:0007744" key="28">
    <source>
    </source>
</evidence>
<reference key="1">
    <citation type="journal article" date="1992" name="Nat. Genet.">
        <title>Mutations in the 70K peroxisomal membrane protein gene in Zellweger syndrome.</title>
        <authorList>
            <person name="Gaertner J."/>
            <person name="Moser H."/>
            <person name="Valle D."/>
        </authorList>
    </citation>
    <scope>NUCLEOTIDE SEQUENCE [MRNA] (ISOFORM 1)</scope>
    <scope>VARIANT ASP-17</scope>
    <source>
        <tissue>Liver</tissue>
    </source>
</reference>
<reference key="2">
    <citation type="journal article" date="1992" name="Biochim. Biophys. Acta">
        <title>Nucleotide sequence of the human 70 kDa peroxisomal membrane protein: a member of ATP-binding cassette transporters.</title>
        <authorList>
            <person name="Kamijo K."/>
            <person name="Kamijo T."/>
            <person name="Ueno I."/>
            <person name="Osumi T."/>
            <person name="Hashimoto T."/>
        </authorList>
    </citation>
    <scope>NUCLEOTIDE SEQUENCE [MRNA] (ISOFORM 1)</scope>
    <source>
        <tissue>Liver</tissue>
    </source>
</reference>
<reference key="3">
    <citation type="journal article" date="1998" name="Genomics">
        <title>Genomic organization of the 70-kDa peroxisomal membrane protein gene (PXMP1).</title>
        <authorList>
            <person name="Gaertner J."/>
            <person name="Jimenez-Sanchez G."/>
            <person name="Roerig P."/>
            <person name="Valle D."/>
        </authorList>
    </citation>
    <scope>NUCLEOTIDE SEQUENCE [GENOMIC DNA]</scope>
</reference>
<reference key="4">
    <citation type="submission" date="2003-05" db="EMBL/GenBank/DDBJ databases">
        <title>Cloning of human full-length CDSs in BD Creator(TM) system donor vector.</title>
        <authorList>
            <person name="Kalnine N."/>
            <person name="Chen X."/>
            <person name="Rolfs A."/>
            <person name="Halleck A."/>
            <person name="Hines L."/>
            <person name="Eisenstein S."/>
            <person name="Koundinya M."/>
            <person name="Raphael J."/>
            <person name="Moreira D."/>
            <person name="Kelley T."/>
            <person name="LaBaer J."/>
            <person name="Lin Y."/>
            <person name="Phelan M."/>
            <person name="Farmer A."/>
        </authorList>
    </citation>
    <scope>NUCLEOTIDE SEQUENCE [LARGE SCALE MRNA] (ISOFORM 3)</scope>
</reference>
<reference key="5">
    <citation type="journal article" date="2006" name="Nature">
        <title>The DNA sequence and biological annotation of human chromosome 1.</title>
        <authorList>
            <person name="Gregory S.G."/>
            <person name="Barlow K.F."/>
            <person name="McLay K.E."/>
            <person name="Kaul R."/>
            <person name="Swarbreck D."/>
            <person name="Dunham A."/>
            <person name="Scott C.E."/>
            <person name="Howe K.L."/>
            <person name="Woodfine K."/>
            <person name="Spencer C.C.A."/>
            <person name="Jones M.C."/>
            <person name="Gillson C."/>
            <person name="Searle S."/>
            <person name="Zhou Y."/>
            <person name="Kokocinski F."/>
            <person name="McDonald L."/>
            <person name="Evans R."/>
            <person name="Phillips K."/>
            <person name="Atkinson A."/>
            <person name="Cooper R."/>
            <person name="Jones C."/>
            <person name="Hall R.E."/>
            <person name="Andrews T.D."/>
            <person name="Lloyd C."/>
            <person name="Ainscough R."/>
            <person name="Almeida J.P."/>
            <person name="Ambrose K.D."/>
            <person name="Anderson F."/>
            <person name="Andrew R.W."/>
            <person name="Ashwell R.I.S."/>
            <person name="Aubin K."/>
            <person name="Babbage A.K."/>
            <person name="Bagguley C.L."/>
            <person name="Bailey J."/>
            <person name="Beasley H."/>
            <person name="Bethel G."/>
            <person name="Bird C.P."/>
            <person name="Bray-Allen S."/>
            <person name="Brown J.Y."/>
            <person name="Brown A.J."/>
            <person name="Buckley D."/>
            <person name="Burton J."/>
            <person name="Bye J."/>
            <person name="Carder C."/>
            <person name="Chapman J.C."/>
            <person name="Clark S.Y."/>
            <person name="Clarke G."/>
            <person name="Clee C."/>
            <person name="Cobley V."/>
            <person name="Collier R.E."/>
            <person name="Corby N."/>
            <person name="Coville G.J."/>
            <person name="Davies J."/>
            <person name="Deadman R."/>
            <person name="Dunn M."/>
            <person name="Earthrowl M."/>
            <person name="Ellington A.G."/>
            <person name="Errington H."/>
            <person name="Frankish A."/>
            <person name="Frankland J."/>
            <person name="French L."/>
            <person name="Garner P."/>
            <person name="Garnett J."/>
            <person name="Gay L."/>
            <person name="Ghori M.R.J."/>
            <person name="Gibson R."/>
            <person name="Gilby L.M."/>
            <person name="Gillett W."/>
            <person name="Glithero R.J."/>
            <person name="Grafham D.V."/>
            <person name="Griffiths C."/>
            <person name="Griffiths-Jones S."/>
            <person name="Grocock R."/>
            <person name="Hammond S."/>
            <person name="Harrison E.S.I."/>
            <person name="Hart E."/>
            <person name="Haugen E."/>
            <person name="Heath P.D."/>
            <person name="Holmes S."/>
            <person name="Holt K."/>
            <person name="Howden P.J."/>
            <person name="Hunt A.R."/>
            <person name="Hunt S.E."/>
            <person name="Hunter G."/>
            <person name="Isherwood J."/>
            <person name="James R."/>
            <person name="Johnson C."/>
            <person name="Johnson D."/>
            <person name="Joy A."/>
            <person name="Kay M."/>
            <person name="Kershaw J.K."/>
            <person name="Kibukawa M."/>
            <person name="Kimberley A.M."/>
            <person name="King A."/>
            <person name="Knights A.J."/>
            <person name="Lad H."/>
            <person name="Laird G."/>
            <person name="Lawlor S."/>
            <person name="Leongamornlert D.A."/>
            <person name="Lloyd D.M."/>
            <person name="Loveland J."/>
            <person name="Lovell J."/>
            <person name="Lush M.J."/>
            <person name="Lyne R."/>
            <person name="Martin S."/>
            <person name="Mashreghi-Mohammadi M."/>
            <person name="Matthews L."/>
            <person name="Matthews N.S.W."/>
            <person name="McLaren S."/>
            <person name="Milne S."/>
            <person name="Mistry S."/>
            <person name="Moore M.J.F."/>
            <person name="Nickerson T."/>
            <person name="O'Dell C.N."/>
            <person name="Oliver K."/>
            <person name="Palmeiri A."/>
            <person name="Palmer S.A."/>
            <person name="Parker A."/>
            <person name="Patel D."/>
            <person name="Pearce A.V."/>
            <person name="Peck A.I."/>
            <person name="Pelan S."/>
            <person name="Phelps K."/>
            <person name="Phillimore B.J."/>
            <person name="Plumb R."/>
            <person name="Rajan J."/>
            <person name="Raymond C."/>
            <person name="Rouse G."/>
            <person name="Saenphimmachak C."/>
            <person name="Sehra H.K."/>
            <person name="Sheridan E."/>
            <person name="Shownkeen R."/>
            <person name="Sims S."/>
            <person name="Skuce C.D."/>
            <person name="Smith M."/>
            <person name="Steward C."/>
            <person name="Subramanian S."/>
            <person name="Sycamore N."/>
            <person name="Tracey A."/>
            <person name="Tromans A."/>
            <person name="Van Helmond Z."/>
            <person name="Wall M."/>
            <person name="Wallis J.M."/>
            <person name="White S."/>
            <person name="Whitehead S.L."/>
            <person name="Wilkinson J.E."/>
            <person name="Willey D.L."/>
            <person name="Williams H."/>
            <person name="Wilming L."/>
            <person name="Wray P.W."/>
            <person name="Wu Z."/>
            <person name="Coulson A."/>
            <person name="Vaudin M."/>
            <person name="Sulston J.E."/>
            <person name="Durbin R.M."/>
            <person name="Hubbard T."/>
            <person name="Wooster R."/>
            <person name="Dunham I."/>
            <person name="Carter N.P."/>
            <person name="McVean G."/>
            <person name="Ross M.T."/>
            <person name="Harrow J."/>
            <person name="Olson M.V."/>
            <person name="Beck S."/>
            <person name="Rogers J."/>
            <person name="Bentley D.R."/>
        </authorList>
    </citation>
    <scope>NUCLEOTIDE SEQUENCE [LARGE SCALE GENOMIC DNA]</scope>
</reference>
<reference key="6">
    <citation type="submission" date="2005-09" db="EMBL/GenBank/DDBJ databases">
        <authorList>
            <person name="Mural R.J."/>
            <person name="Istrail S."/>
            <person name="Sutton G.G."/>
            <person name="Florea L."/>
            <person name="Halpern A.L."/>
            <person name="Mobarry C.M."/>
            <person name="Lippert R."/>
            <person name="Walenz B."/>
            <person name="Shatkay H."/>
            <person name="Dew I."/>
            <person name="Miller J.R."/>
            <person name="Flanigan M.J."/>
            <person name="Edwards N.J."/>
            <person name="Bolanos R."/>
            <person name="Fasulo D."/>
            <person name="Halldorsson B.V."/>
            <person name="Hannenhalli S."/>
            <person name="Turner R."/>
            <person name="Yooseph S."/>
            <person name="Lu F."/>
            <person name="Nusskern D.R."/>
            <person name="Shue B.C."/>
            <person name="Zheng X.H."/>
            <person name="Zhong F."/>
            <person name="Delcher A.L."/>
            <person name="Huson D.H."/>
            <person name="Kravitz S.A."/>
            <person name="Mouchard L."/>
            <person name="Reinert K."/>
            <person name="Remington K.A."/>
            <person name="Clark A.G."/>
            <person name="Waterman M.S."/>
            <person name="Eichler E.E."/>
            <person name="Adams M.D."/>
            <person name="Hunkapiller M.W."/>
            <person name="Myers E.W."/>
            <person name="Venter J.C."/>
        </authorList>
    </citation>
    <scope>NUCLEOTIDE SEQUENCE [LARGE SCALE GENOMIC DNA]</scope>
</reference>
<reference key="7">
    <citation type="journal article" date="2004" name="Genome Res.">
        <title>The status, quality, and expansion of the NIH full-length cDNA project: the Mammalian Gene Collection (MGC).</title>
        <authorList>
            <consortium name="The MGC Project Team"/>
        </authorList>
    </citation>
    <scope>NUCLEOTIDE SEQUENCE [LARGE SCALE MRNA] (ISOFORMS 2 AND 3)</scope>
    <source>
        <tissue>Brain</tissue>
        <tissue>Lung</tissue>
    </source>
</reference>
<reference key="8">
    <citation type="journal article" date="1998" name="Proc. Natl. Acad. Sci. U.S.A.">
        <title>Human PEX1 cloned by functional complementation on a CHO cell mutant is responsible for peroxisome-deficient Zellweger syndrome of complementation group I.</title>
        <authorList>
            <person name="Tamura S."/>
            <person name="Okumoto K."/>
            <person name="Toyama R."/>
            <person name="Shimozawa N."/>
            <person name="Tsukamoto T."/>
            <person name="Suzuki Y."/>
            <person name="Osumi T."/>
            <person name="Kondo N."/>
            <person name="Fujiki Y."/>
        </authorList>
    </citation>
    <scope>CAUTION</scope>
</reference>
<reference key="9">
    <citation type="journal article" date="1999" name="J. Biol. Chem.">
        <title>Homo- and heterodimerization of peroxisomal ATP-binding cassette half-transporters.</title>
        <authorList>
            <person name="Liu L.X."/>
            <person name="Janvier K."/>
            <person name="Berteaux-Lecellier V."/>
            <person name="Cartier N."/>
            <person name="Benarous R."/>
            <person name="Aubourg P."/>
        </authorList>
    </citation>
    <scope>SUBUNIT</scope>
    <scope>INTERACTION WITH ABCD1 AND ABCD2</scope>
</reference>
<reference key="10">
    <citation type="journal article" date="2007" name="J. Biol. Chem.">
        <title>Live cell FRET microscopy: homo- and heterodimerization of two human peroxisomal ABC transporters, the adrenoleukodystrophy protein (ALDP, ABCD1) and PMP70 (ABCD3).</title>
        <authorList>
            <person name="Hillebrand M."/>
            <person name="Verrier S.E."/>
            <person name="Ohlenbusch A."/>
            <person name="Schaefer A."/>
            <person name="Soeling H.D."/>
            <person name="Wouters F.S."/>
            <person name="Gaertner J."/>
        </authorList>
    </citation>
    <scope>SUBUNIT</scope>
    <scope>INTERACTION WITH ABCD1</scope>
</reference>
<reference key="11">
    <citation type="journal article" date="2000" name="Biochem. Biophys. Res. Commun.">
        <title>Human adrenoleukodystrophy protein and related peroxisomal ABC transporters interact with the peroxisomal assembly protein PEX19p.</title>
        <authorList>
            <person name="Gloeckner C.J."/>
            <person name="Mayerhofer P.U."/>
            <person name="Landgraf P."/>
            <person name="Muntau A.C."/>
            <person name="Holzinger A."/>
            <person name="Gerber J.-K."/>
            <person name="Kammerer S."/>
            <person name="Adamski J."/>
            <person name="Roscher A.A."/>
        </authorList>
    </citation>
    <scope>INTERACTION WITH PEX19</scope>
    <source>
        <tissue>Brain</tissue>
    </source>
</reference>
<reference key="12">
    <citation type="journal article" date="2000" name="J. Cell Biol.">
        <title>PEX19 binds multiple peroxisomal membrane proteins, is predominantly cytoplasmic, and is required for peroxisome membrane synthesis.</title>
        <authorList>
            <person name="Sacksteder K.A."/>
            <person name="Jones J.M."/>
            <person name="South S.T."/>
            <person name="Li X."/>
            <person name="Liu Y."/>
            <person name="Gould S.J."/>
        </authorList>
    </citation>
    <scope>SUBCELLULAR LOCATION</scope>
    <scope>INTERACTION WITH PEX19</scope>
</reference>
<reference key="13">
    <citation type="journal article" date="2001" name="FEBS Lett.">
        <title>Characterization and functional analysis of the nucleotide binding fold in human peroxisomal ATP binding cassette transporters.</title>
        <authorList>
            <person name="Roerig P."/>
            <person name="Mayerhofer P."/>
            <person name="Holzinger A."/>
            <person name="Gaertner J."/>
        </authorList>
    </citation>
    <scope>FUNCTION</scope>
    <scope>MUTAGENESIS OF GLY-478 AND SER-572</scope>
    <scope>BIOPHYSICOCHEMICAL PROPERTIES</scope>
    <scope>CATALYTIC ACTIVITY</scope>
    <scope>ATP-BINDING</scope>
</reference>
<reference key="14">
    <citation type="journal article" date="2005" name="Biochim. Biophys. Acta">
        <title>Role of Pex19p in the targeting of PMP70 to peroxisome.</title>
        <authorList>
            <person name="Kashiwayama Y."/>
            <person name="Asahina K."/>
            <person name="Shibata H."/>
            <person name="Morita M."/>
            <person name="Muntau A.C."/>
            <person name="Roscher A.A."/>
            <person name="Wanders R.J."/>
            <person name="Shimozawa N."/>
            <person name="Sakaguchi M."/>
            <person name="Kato H."/>
            <person name="Imanaka T."/>
        </authorList>
    </citation>
    <scope>INTERACTION WITH PEX19</scope>
    <scope>REGION</scope>
    <scope>SUBCELLULAR LOCATION</scope>
</reference>
<reference key="15">
    <citation type="journal article" date="2007" name="J. Biol. Chem.">
        <title>Hydrophobic regions adjacent to transmembrane domains 1 and 5 are important for the targeting of the 70-kDa peroxisomal membrane protein.</title>
        <authorList>
            <person name="Kashiwayama Y."/>
            <person name="Asahina K."/>
            <person name="Morita M."/>
            <person name="Imanaka T."/>
        </authorList>
    </citation>
    <scope>SUBCELLULAR LOCATION</scope>
    <scope>INTERACTION WITH PEX19</scope>
    <scope>MUTAGENESIS OF 21-LEU--LEU-23; 70-ILE-LEU-71 AND 307-ILE-LEU-308</scope>
</reference>
<reference key="16">
    <citation type="journal article" date="2009" name="Science">
        <title>Lysine acetylation targets protein complexes and co-regulates major cellular functions.</title>
        <authorList>
            <person name="Choudhary C."/>
            <person name="Kumar C."/>
            <person name="Gnad F."/>
            <person name="Nielsen M.L."/>
            <person name="Rehman M."/>
            <person name="Walther T.C."/>
            <person name="Olsen J.V."/>
            <person name="Mann M."/>
        </authorList>
    </citation>
    <scope>ACETYLATION [LARGE SCALE ANALYSIS] AT LYS-260 AND LYS-399</scope>
    <scope>IDENTIFICATION BY MASS SPECTROMETRY [LARGE SCALE ANALYSIS]</scope>
</reference>
<reference key="17">
    <citation type="journal article" date="2011" name="BMC Syst. Biol.">
        <title>Initial characterization of the human central proteome.</title>
        <authorList>
            <person name="Burkard T.R."/>
            <person name="Planyavsky M."/>
            <person name="Kaupe I."/>
            <person name="Breitwieser F.P."/>
            <person name="Buerckstuemmer T."/>
            <person name="Bennett K.L."/>
            <person name="Superti-Furga G."/>
            <person name="Colinge J."/>
        </authorList>
    </citation>
    <scope>IDENTIFICATION BY MASS SPECTROMETRY [LARGE SCALE ANALYSIS]</scope>
</reference>
<reference key="18">
    <citation type="journal article" date="2012" name="Proc. Natl. Acad. Sci. U.S.A.">
        <title>N-terminal acetylome analyses and functional insights of the N-terminal acetyltransferase NatB.</title>
        <authorList>
            <person name="Van Damme P."/>
            <person name="Lasa M."/>
            <person name="Polevoda B."/>
            <person name="Gazquez C."/>
            <person name="Elosegui-Artola A."/>
            <person name="Kim D.S."/>
            <person name="De Juan-Pardo E."/>
            <person name="Demeyer K."/>
            <person name="Hole K."/>
            <person name="Larrea E."/>
            <person name="Timmerman E."/>
            <person name="Prieto J."/>
            <person name="Arnesen T."/>
            <person name="Sherman F."/>
            <person name="Gevaert K."/>
            <person name="Aldabe R."/>
        </authorList>
    </citation>
    <scope>IDENTIFICATION BY MASS SPECTROMETRY [LARGE SCALE ANALYSIS]</scope>
</reference>
<reference key="19">
    <citation type="journal article" date="2014" name="Biochim. Biophys. Acta">
        <title>A role for the human peroxisomal half-transporter ABCD3 in the oxidation of dicarboxylic acids.</title>
        <authorList>
            <person name="van Roermund C.W."/>
            <person name="Ijlst L."/>
            <person name="Wagemans T."/>
            <person name="Wanders R.J."/>
            <person name="Waterham H.R."/>
        </authorList>
    </citation>
    <scope>FUNCTION</scope>
    <scope>CATALYTIC ACTIVITY</scope>
    <scope>SUBSTRATE SPECIFICITY</scope>
    <scope>SUBCELLULAR LOCATION</scope>
</reference>
<reference key="20">
    <citation type="journal article" date="2014" name="J. Proteomics">
        <title>An enzyme assisted RP-RPLC approach for in-depth analysis of human liver phosphoproteome.</title>
        <authorList>
            <person name="Bian Y."/>
            <person name="Song C."/>
            <person name="Cheng K."/>
            <person name="Dong M."/>
            <person name="Wang F."/>
            <person name="Huang J."/>
            <person name="Sun D."/>
            <person name="Wang L."/>
            <person name="Ye M."/>
            <person name="Zou H."/>
        </authorList>
    </citation>
    <scope>IDENTIFICATION BY MASS SPECTROMETRY [LARGE SCALE ANALYSIS]</scope>
    <source>
        <tissue>Liver</tissue>
    </source>
</reference>
<reference key="21">
    <citation type="journal article" date="2015" name="Hum. Mol. Genet.">
        <title>A novel bile acid biosynthesis defect due to a deficiency of peroxisomal ABCD3.</title>
        <authorList>
            <person name="Ferdinandusse S."/>
            <person name="Jimenez-Sanchez G."/>
            <person name="Koster J."/>
            <person name="Denis S."/>
            <person name="Van Roermund C.W."/>
            <person name="Silva-Zolezzi I."/>
            <person name="Moser A.B."/>
            <person name="Visser W.F."/>
            <person name="Gulluoglu M."/>
            <person name="Durmaz O."/>
            <person name="Demirkol M."/>
            <person name="Waterham H.R."/>
            <person name="Goekcay G."/>
            <person name="Wanders R.J."/>
            <person name="Valle D."/>
        </authorList>
    </citation>
    <scope>FUNCTION</scope>
    <scope>INVOLVEMENT IN CBAS5</scope>
</reference>
<reference key="22">
    <citation type="journal article" date="2015" name="Proteomics">
        <title>N-terminome analysis of the human mitochondrial proteome.</title>
        <authorList>
            <person name="Vaca Jacome A.S."/>
            <person name="Rabilloud T."/>
            <person name="Schaeffer-Reiss C."/>
            <person name="Rompais M."/>
            <person name="Ayoub D."/>
            <person name="Lane L."/>
            <person name="Bairoch A."/>
            <person name="Van Dorsselaer A."/>
            <person name="Carapito C."/>
        </authorList>
    </citation>
    <scope>IDENTIFICATION BY MASS SPECTROMETRY [LARGE SCALE ANALYSIS]</scope>
</reference>
<reference key="23">
    <citation type="journal article" date="2016" name="J. Cell Biol.">
        <title>PEX2 is the E3 ubiquitin ligase required for pexophagy during starvation.</title>
        <authorList>
            <person name="Sargent G."/>
            <person name="van Zutphen T."/>
            <person name="Shatseva T."/>
            <person name="Zhang L."/>
            <person name="Di Giovanni V."/>
            <person name="Bandsma R."/>
            <person name="Kim P.K."/>
        </authorList>
    </citation>
    <scope>UBIQUITINATION</scope>
</reference>
<reference key="24">
    <citation type="journal article" date="2018" name="Biochem. Biophys. Res. Commun.">
        <title>Characterization of human ATP-binding cassette protein subfamily D reconstituted into proteoliposomes.</title>
        <authorList>
            <person name="Okamoto T."/>
            <person name="Kawaguchi K."/>
            <person name="Watanabe S."/>
            <person name="Agustina R."/>
            <person name="Ikejima T."/>
            <person name="Ikeda K."/>
            <person name="Nakano M."/>
            <person name="Morita M."/>
            <person name="Imanaka T."/>
        </authorList>
    </citation>
    <scope>FUNCTION</scope>
    <scope>CATALYTIC ACTIVITY</scope>
    <scope>SUBCELLULAR LOCATION</scope>
</reference>
<comment type="function">
    <text evidence="1 9 14 15 16 18">Broad substrate specificity ATP-dependent transporter of the ATP-binding cassette (ABC) family that catalyzes the transport of long-chain fatty acids (LCFA)-CoA, dicarboxylic acids-CoA, long-branched-chain fatty acids-CoA and bile acids from the cytosol to the peroxisome lumen for beta-oxydation (PubMed:11248239, PubMed:24333844, PubMed:25168382, PubMed:29397936). Has fatty acyl-CoA thioesterase and ATPase activities (PubMed:29397936). Probably hydrolyzes fatty acyl-CoAs into free fatty acids prior to their ATP-dependent transport into peroxisomes (By similarity). Thus, play a role in regulation of LCFAs and energy metabolism namely, in the degradation and biosynthesis of fatty acids by beta-oxidation (PubMed:24333844, PubMed:25944712).</text>
</comment>
<comment type="catalytic activity">
    <reaction evidence="18">
        <text>a very long-chain fatty acyl-CoA + H2O = a very long-chain fatty acid + CoA + H(+)</text>
        <dbReference type="Rhea" id="RHEA:67072"/>
        <dbReference type="ChEBI" id="CHEBI:15377"/>
        <dbReference type="ChEBI" id="CHEBI:15378"/>
        <dbReference type="ChEBI" id="CHEBI:57287"/>
        <dbReference type="ChEBI" id="CHEBI:58950"/>
        <dbReference type="ChEBI" id="CHEBI:138261"/>
    </reaction>
    <physiologicalReaction direction="left-to-right" evidence="26">
        <dbReference type="Rhea" id="RHEA:67073"/>
    </physiologicalReaction>
</comment>
<comment type="catalytic activity">
    <reaction evidence="18">
        <text>a very long-chain fatty acid(in) + ATP + H2O = a very long-chain fatty acid(out) + ADP + phosphate + H(+)</text>
        <dbReference type="Rhea" id="RHEA:67080"/>
        <dbReference type="ChEBI" id="CHEBI:15377"/>
        <dbReference type="ChEBI" id="CHEBI:15378"/>
        <dbReference type="ChEBI" id="CHEBI:30616"/>
        <dbReference type="ChEBI" id="CHEBI:43474"/>
        <dbReference type="ChEBI" id="CHEBI:58950"/>
        <dbReference type="ChEBI" id="CHEBI:456216"/>
    </reaction>
    <physiologicalReaction direction="left-to-right" evidence="26">
        <dbReference type="Rhea" id="RHEA:67081"/>
    </physiologicalReaction>
</comment>
<comment type="catalytic activity">
    <reaction evidence="25 26">
        <text>a long-chain fatty acyl-CoA + H2O = a long-chain fatty acid + CoA + H(+)</text>
        <dbReference type="Rhea" id="RHEA:67680"/>
        <dbReference type="ChEBI" id="CHEBI:15377"/>
        <dbReference type="ChEBI" id="CHEBI:15378"/>
        <dbReference type="ChEBI" id="CHEBI:57287"/>
        <dbReference type="ChEBI" id="CHEBI:57560"/>
        <dbReference type="ChEBI" id="CHEBI:83139"/>
    </reaction>
    <physiologicalReaction direction="left-to-right" evidence="25">
        <dbReference type="Rhea" id="RHEA:67681"/>
    </physiologicalReaction>
</comment>
<comment type="catalytic activity">
    <reaction evidence="25 26">
        <text>a long-chain fatty acid(in) + ATP + H2O = a long-chain fatty acid(out) + ADP + phosphate + H(+)</text>
        <dbReference type="Rhea" id="RHEA:67684"/>
        <dbReference type="ChEBI" id="CHEBI:15377"/>
        <dbReference type="ChEBI" id="CHEBI:15378"/>
        <dbReference type="ChEBI" id="CHEBI:30616"/>
        <dbReference type="ChEBI" id="CHEBI:43474"/>
        <dbReference type="ChEBI" id="CHEBI:57560"/>
        <dbReference type="ChEBI" id="CHEBI:456216"/>
    </reaction>
    <physiologicalReaction direction="left-to-right" evidence="25">
        <dbReference type="Rhea" id="RHEA:67685"/>
    </physiologicalReaction>
</comment>
<comment type="catalytic activity">
    <reaction evidence="25 26">
        <text>pristanoyl-CoA + H2O = 2,6,10,14-tetramethylpentadecanoate + CoA + H(+)</text>
        <dbReference type="Rhea" id="RHEA:40415"/>
        <dbReference type="ChEBI" id="CHEBI:15377"/>
        <dbReference type="ChEBI" id="CHEBI:15378"/>
        <dbReference type="ChEBI" id="CHEBI:57287"/>
        <dbReference type="ChEBI" id="CHEBI:77250"/>
        <dbReference type="ChEBI" id="CHEBI:77268"/>
    </reaction>
    <physiologicalReaction direction="left-to-right" evidence="25">
        <dbReference type="Rhea" id="RHEA:40416"/>
    </physiologicalReaction>
</comment>
<comment type="catalytic activity">
    <reaction evidence="25 26">
        <text>2,6,10,14-tetramethylpentadecanoate(in) + ATP + H2O = 2,6,10,14-tetramethylpentadecanoate(out) + ADP + phosphate + H(+)</text>
        <dbReference type="Rhea" id="RHEA:67688"/>
        <dbReference type="ChEBI" id="CHEBI:15377"/>
        <dbReference type="ChEBI" id="CHEBI:15378"/>
        <dbReference type="ChEBI" id="CHEBI:30616"/>
        <dbReference type="ChEBI" id="CHEBI:43474"/>
        <dbReference type="ChEBI" id="CHEBI:77268"/>
        <dbReference type="ChEBI" id="CHEBI:456216"/>
    </reaction>
    <physiologicalReaction direction="left-to-right" evidence="25">
        <dbReference type="Rhea" id="RHEA:67689"/>
    </physiologicalReaction>
</comment>
<comment type="catalytic activity">
    <reaction evidence="25 26">
        <text>hexadecanedioyl-CoA + H2O = hexadecanedioate + CoA + H(+)</text>
        <dbReference type="Rhea" id="RHEA:67696"/>
        <dbReference type="ChEBI" id="CHEBI:15377"/>
        <dbReference type="ChEBI" id="CHEBI:15378"/>
        <dbReference type="ChEBI" id="CHEBI:57287"/>
        <dbReference type="ChEBI" id="CHEBI:76276"/>
        <dbReference type="ChEBI" id="CHEBI:77085"/>
    </reaction>
    <physiologicalReaction direction="left-to-right" evidence="25">
        <dbReference type="Rhea" id="RHEA:67697"/>
    </physiologicalReaction>
</comment>
<comment type="catalytic activity">
    <reaction evidence="25 26">
        <text>hexadecanedioate(in) + ATP + H2O = hexadecanedioate(out) + ADP + phosphate + H(+)</text>
        <dbReference type="Rhea" id="RHEA:67692"/>
        <dbReference type="ChEBI" id="CHEBI:15377"/>
        <dbReference type="ChEBI" id="CHEBI:15378"/>
        <dbReference type="ChEBI" id="CHEBI:30616"/>
        <dbReference type="ChEBI" id="CHEBI:43474"/>
        <dbReference type="ChEBI" id="CHEBI:76276"/>
        <dbReference type="ChEBI" id="CHEBI:456216"/>
    </reaction>
</comment>
<comment type="catalytic activity">
    <reaction evidence="25 26">
        <text>(5Z,8Z,11Z,14Z,17Z)-eicosapentaenoyl-CoA + H2O = (5Z,8Z,11Z,14Z,17Z)-eicosapentaenoate + CoA + H(+)</text>
        <dbReference type="Rhea" id="RHEA:67712"/>
        <dbReference type="ChEBI" id="CHEBI:15377"/>
        <dbReference type="ChEBI" id="CHEBI:15378"/>
        <dbReference type="ChEBI" id="CHEBI:57287"/>
        <dbReference type="ChEBI" id="CHEBI:58562"/>
        <dbReference type="ChEBI" id="CHEBI:73862"/>
    </reaction>
    <physiologicalReaction direction="left-to-right" evidence="25">
        <dbReference type="Rhea" id="RHEA:67713"/>
    </physiologicalReaction>
</comment>
<comment type="catalytic activity">
    <reaction evidence="25 26">
        <text>(5Z,8Z,11Z,14Z,17Z)-eicosapentaenoate(in) + ATP + H2O = (5Z,8Z,11Z,14Z,17Z)-eicosapentaenoate(out) + ADP + phosphate + H(+)</text>
        <dbReference type="Rhea" id="RHEA:67708"/>
        <dbReference type="ChEBI" id="CHEBI:15377"/>
        <dbReference type="ChEBI" id="CHEBI:15378"/>
        <dbReference type="ChEBI" id="CHEBI:30616"/>
        <dbReference type="ChEBI" id="CHEBI:43474"/>
        <dbReference type="ChEBI" id="CHEBI:58562"/>
        <dbReference type="ChEBI" id="CHEBI:456216"/>
    </reaction>
    <physiologicalReaction direction="left-to-right" evidence="25">
        <dbReference type="Rhea" id="RHEA:67709"/>
    </physiologicalReaction>
</comment>
<comment type="catalytic activity">
    <reaction evidence="25 26">
        <text>(4Z,7Z,10Z,13Z,16Z,19Z)-docosahexaenoyl-CoA + H2O = (4Z,7Z,10Z,13Z,16Z,19Z)-docosahexaenoate + CoA + H(+)</text>
        <dbReference type="Rhea" id="RHEA:67700"/>
        <dbReference type="ChEBI" id="CHEBI:15377"/>
        <dbReference type="ChEBI" id="CHEBI:15378"/>
        <dbReference type="ChEBI" id="CHEBI:57287"/>
        <dbReference type="ChEBI" id="CHEBI:74298"/>
        <dbReference type="ChEBI" id="CHEBI:77016"/>
    </reaction>
    <physiologicalReaction direction="left-to-right" evidence="25">
        <dbReference type="Rhea" id="RHEA:67701"/>
    </physiologicalReaction>
</comment>
<comment type="catalytic activity">
    <reaction evidence="25 26">
        <text>(4Z,7Z,10Z,13Z,16Z,19Z)-docosahexaenoate(in) + ATP + H2O = (4Z,7Z,10Z,13Z,16Z,19Z)-docosahexaenoate(out) + ADP + phosphate + H(+)</text>
        <dbReference type="Rhea" id="RHEA:67704"/>
        <dbReference type="ChEBI" id="CHEBI:15377"/>
        <dbReference type="ChEBI" id="CHEBI:15378"/>
        <dbReference type="ChEBI" id="CHEBI:30616"/>
        <dbReference type="ChEBI" id="CHEBI:43474"/>
        <dbReference type="ChEBI" id="CHEBI:77016"/>
        <dbReference type="ChEBI" id="CHEBI:456216"/>
    </reaction>
</comment>
<comment type="biophysicochemical properties">
    <kinetics>
        <KM evidence="9">8.2 uM for ATP</KM>
    </kinetics>
</comment>
<comment type="subunit">
    <text evidence="6 7 8 11 12 13">Homodimers (PubMed:17609205). Can form heterodimers with ABCD1 and ABCD2 (PubMed:10551832, PubMed:10777694, PubMed:17609205). Dimerization is necessary to form an active transporter (PubMed:17609205). Interacts with PEX19; mediates the targeting of ABCD3 to peroxisomes (PubMed:10704444, PubMed:16344115, PubMed:17761678).</text>
</comment>
<comment type="interaction">
    <interactant intactId="EBI-80992">
        <id>P28288</id>
    </interactant>
    <interactant intactId="EBI-81045">
        <id>P33897</id>
        <label>ABCD1</label>
    </interactant>
    <organismsDiffer>false</organismsDiffer>
    <experiments>2</experiments>
</comment>
<comment type="interaction">
    <interactant intactId="EBI-80992">
        <id>P28288</id>
    </interactant>
    <interactant intactId="EBI-594747">
        <id>P40855</id>
        <label>PEX19</label>
    </interactant>
    <organismsDiffer>false</organismsDiffer>
    <experiments>4</experiments>
</comment>
<comment type="interaction">
    <interactant intactId="EBI-25889034">
        <id>P28288-2</id>
    </interactant>
    <interactant intactId="EBI-715087">
        <id>P09471</id>
        <label>GNAO1</label>
    </interactant>
    <organismsDiffer>false</organismsDiffer>
    <experiments>3</experiments>
</comment>
<comment type="interaction">
    <interactant intactId="EBI-25889034">
        <id>P28288-2</id>
    </interactant>
    <interactant intactId="EBI-9091052">
        <id>Q6P4D5-2</id>
        <label>PABIR3</label>
    </interactant>
    <organismsDiffer>false</organismsDiffer>
    <experiments>3</experiments>
</comment>
<comment type="interaction">
    <interactant intactId="EBI-25889034">
        <id>P28288-2</id>
    </interactant>
    <interactant intactId="EBI-998260">
        <id>P53999</id>
        <label>SUB1</label>
    </interactant>
    <organismsDiffer>false</organismsDiffer>
    <experiments>3</experiments>
</comment>
<comment type="subcellular location">
    <subcellularLocation>
        <location evidence="7 11 13 14 18">Peroxisome membrane</location>
        <topology evidence="3">Multi-pass membrane protein</topology>
    </subcellularLocation>
</comment>
<comment type="alternative products">
    <event type="alternative splicing"/>
    <isoform>
        <id>P28288-1</id>
        <name>1</name>
        <sequence type="displayed"/>
    </isoform>
    <isoform>
        <id>P28288-2</id>
        <name>2</name>
        <sequence type="described" ref="VSP_031189"/>
    </isoform>
    <isoform>
        <id>P28288-3</id>
        <name>3</name>
        <sequence type="described" ref="VSP_031187 VSP_031188"/>
    </isoform>
</comment>
<comment type="PTM">
    <text evidence="17">Ubiquitinated by PEX2 during pexophagy in response to starvation, leading to its degradation.</text>
</comment>
<comment type="disease" evidence="15">
    <disease id="DI-04360">
        <name>Congenital bile acid synthesis defect 5</name>
        <acronym>CBAS5</acronym>
        <description>An autosomal recessive disorder characterized by hepatosplenomegaly, hepatic fibrosis, progressive liver failure, and accumulation of peroxisomal C27-bile acid intermediates in plasma.</description>
        <dbReference type="MIM" id="616278"/>
    </disease>
    <text>The disease is caused by variants affecting the gene represented in this entry.</text>
</comment>
<comment type="similarity">
    <text evidence="24">Belongs to the ABC transporter superfamily. ABCD family. Peroxisomal fatty acyl CoA transporter (TC 3.A.1.203) subfamily.</text>
</comment>
<comment type="caution">
    <text evidence="10 19">Mutation in ABCD3 have been found in two individuals affected by Zellweger syndrome (PubMed:1301993). Later studies, however, showed unambiguously that a PEX1 defect was the underlying cause of the defect in peroxisome biogenesis in these patients (PubMed:9539740).</text>
</comment>
<comment type="online information" name="ABCMdb">
    <link uri="http://abcm2.hegelab.org/search"/>
    <text>Database for mutations in ABC proteins</text>
</comment>
<gene>
    <name evidence="27" type="primary">ABCD3</name>
    <name type="synonym">PMP70</name>
    <name evidence="22" type="synonym">PXMP1</name>
</gene>